<dbReference type="EMBL" id="CP000036">
    <property type="protein sequence ID" value="ABB67084.1"/>
    <property type="molecule type" value="Genomic_DNA"/>
</dbReference>
<dbReference type="RefSeq" id="WP_001090823.1">
    <property type="nucleotide sequence ID" value="NC_007613.1"/>
</dbReference>
<dbReference type="SMR" id="Q31XX4"/>
<dbReference type="KEGG" id="sbo:SBO_2540"/>
<dbReference type="HOGENOM" id="CLU_047530_3_1_6"/>
<dbReference type="Proteomes" id="UP000007067">
    <property type="component" value="Chromosome"/>
</dbReference>
<dbReference type="GO" id="GO:0005886">
    <property type="term" value="C:plasma membrane"/>
    <property type="evidence" value="ECO:0007669"/>
    <property type="project" value="UniProtKB-SubCell"/>
</dbReference>
<dbReference type="GO" id="GO:0003677">
    <property type="term" value="F:DNA binding"/>
    <property type="evidence" value="ECO:0007669"/>
    <property type="project" value="UniProtKB-KW"/>
</dbReference>
<dbReference type="GO" id="GO:0008360">
    <property type="term" value="P:regulation of cell shape"/>
    <property type="evidence" value="ECO:0007669"/>
    <property type="project" value="UniProtKB-UniRule"/>
</dbReference>
<dbReference type="CDD" id="cd00093">
    <property type="entry name" value="HTH_XRE"/>
    <property type="match status" value="1"/>
</dbReference>
<dbReference type="FunFam" id="1.10.260.40:FF:000014">
    <property type="entry name" value="Cytoskeleton protein RodZ"/>
    <property type="match status" value="1"/>
</dbReference>
<dbReference type="Gene3D" id="1.10.260.40">
    <property type="entry name" value="lambda repressor-like DNA-binding domains"/>
    <property type="match status" value="1"/>
</dbReference>
<dbReference type="HAMAP" id="MF_02017">
    <property type="entry name" value="RodZ"/>
    <property type="match status" value="1"/>
</dbReference>
<dbReference type="InterPro" id="IPR050400">
    <property type="entry name" value="Bact_Cytoskel_RodZ"/>
</dbReference>
<dbReference type="InterPro" id="IPR001387">
    <property type="entry name" value="Cro/C1-type_HTH"/>
</dbReference>
<dbReference type="InterPro" id="IPR010982">
    <property type="entry name" value="Lambda_DNA-bd_dom_sf"/>
</dbReference>
<dbReference type="InterPro" id="IPR023690">
    <property type="entry name" value="RodZ"/>
</dbReference>
<dbReference type="InterPro" id="IPR025194">
    <property type="entry name" value="RodZ-like_C"/>
</dbReference>
<dbReference type="NCBIfam" id="NF008109">
    <property type="entry name" value="PRK10856.1"/>
    <property type="match status" value="1"/>
</dbReference>
<dbReference type="PANTHER" id="PTHR34475">
    <property type="match status" value="1"/>
</dbReference>
<dbReference type="PANTHER" id="PTHR34475:SF1">
    <property type="entry name" value="CYTOSKELETON PROTEIN RODZ"/>
    <property type="match status" value="1"/>
</dbReference>
<dbReference type="Pfam" id="PF13413">
    <property type="entry name" value="HTH_25"/>
    <property type="match status" value="1"/>
</dbReference>
<dbReference type="Pfam" id="PF13464">
    <property type="entry name" value="RodZ_C"/>
    <property type="match status" value="1"/>
</dbReference>
<dbReference type="SMART" id="SM00530">
    <property type="entry name" value="HTH_XRE"/>
    <property type="match status" value="1"/>
</dbReference>
<dbReference type="SUPFAM" id="SSF47413">
    <property type="entry name" value="lambda repressor-like DNA-binding domains"/>
    <property type="match status" value="1"/>
</dbReference>
<dbReference type="PROSITE" id="PS50943">
    <property type="entry name" value="HTH_CROC1"/>
    <property type="match status" value="1"/>
</dbReference>
<organism>
    <name type="scientific">Shigella boydii serotype 4 (strain Sb227)</name>
    <dbReference type="NCBI Taxonomy" id="300268"/>
    <lineage>
        <taxon>Bacteria</taxon>
        <taxon>Pseudomonadati</taxon>
        <taxon>Pseudomonadota</taxon>
        <taxon>Gammaproteobacteria</taxon>
        <taxon>Enterobacterales</taxon>
        <taxon>Enterobacteriaceae</taxon>
        <taxon>Shigella</taxon>
    </lineage>
</organism>
<sequence length="337" mass="36189">MNTEATHDQNEALTTGARLRNAREQLGLSQQAVAERLCLKVSTVRDIEEDKAPADLASTFLRGYIRSYARLVHIPEEELLLGLEKQAPLRAAKVAPMQSFSLGKRRKKRDGWLMTFTWLVLFVVIGLSGAWWWQDHKAQQEEITTMADQSSAELSSNSEQGQSVPLNTSTTTDPATTSTPPASVDTTATNTQTPAVTAPAPAVDPQQNAVVSPSQANVDTAATPAPTAATTPDGAAPLPTDQAGVTTPVADPNALVMNFTADCWLEVTDATGKKLFSGMQRKDGNLNLTGQAPYKLKIGAPAAVQIQYQGKPVDLSRFIRTNQVARLTLNAEQSPAQ</sequence>
<protein>
    <recommendedName>
        <fullName evidence="1">Cytoskeleton protein RodZ</fullName>
    </recommendedName>
</protein>
<evidence type="ECO:0000255" key="1">
    <source>
        <dbReference type="HAMAP-Rule" id="MF_02017"/>
    </source>
</evidence>
<evidence type="ECO:0000256" key="2">
    <source>
        <dbReference type="SAM" id="MobiDB-lite"/>
    </source>
</evidence>
<keyword id="KW-0997">Cell inner membrane</keyword>
<keyword id="KW-1003">Cell membrane</keyword>
<keyword id="KW-0133">Cell shape</keyword>
<keyword id="KW-0238">DNA-binding</keyword>
<keyword id="KW-0472">Membrane</keyword>
<keyword id="KW-0735">Signal-anchor</keyword>
<keyword id="KW-0812">Transmembrane</keyword>
<keyword id="KW-1133">Transmembrane helix</keyword>
<reference key="1">
    <citation type="journal article" date="2005" name="Nucleic Acids Res.">
        <title>Genome dynamics and diversity of Shigella species, the etiologic agents of bacillary dysentery.</title>
        <authorList>
            <person name="Yang F."/>
            <person name="Yang J."/>
            <person name="Zhang X."/>
            <person name="Chen L."/>
            <person name="Jiang Y."/>
            <person name="Yan Y."/>
            <person name="Tang X."/>
            <person name="Wang J."/>
            <person name="Xiong Z."/>
            <person name="Dong J."/>
            <person name="Xue Y."/>
            <person name="Zhu Y."/>
            <person name="Xu X."/>
            <person name="Sun L."/>
            <person name="Chen S."/>
            <person name="Nie H."/>
            <person name="Peng J."/>
            <person name="Xu J."/>
            <person name="Wang Y."/>
            <person name="Yuan Z."/>
            <person name="Wen Y."/>
            <person name="Yao Z."/>
            <person name="Shen Y."/>
            <person name="Qiang B."/>
            <person name="Hou Y."/>
            <person name="Yu J."/>
            <person name="Jin Q."/>
        </authorList>
    </citation>
    <scope>NUCLEOTIDE SEQUENCE [LARGE SCALE GENOMIC DNA]</scope>
    <source>
        <strain>Sb227</strain>
    </source>
</reference>
<feature type="chain" id="PRO_0000361863" description="Cytoskeleton protein RodZ">
    <location>
        <begin position="1"/>
        <end position="337"/>
    </location>
</feature>
<feature type="topological domain" description="Cytoplasmic" evidence="1">
    <location>
        <begin position="1"/>
        <end position="111"/>
    </location>
</feature>
<feature type="transmembrane region" description="Helical; Signal-anchor for type II membrane protein" evidence="1">
    <location>
        <begin position="112"/>
        <end position="132"/>
    </location>
</feature>
<feature type="topological domain" description="Periplasmic" evidence="1">
    <location>
        <begin position="133"/>
        <end position="337"/>
    </location>
</feature>
<feature type="domain" description="HTH cro/C1-type" evidence="1">
    <location>
        <begin position="19"/>
        <end position="71"/>
    </location>
</feature>
<feature type="DNA-binding region" description="H-T-H motif" evidence="1">
    <location>
        <begin position="30"/>
        <end position="49"/>
    </location>
</feature>
<feature type="region of interest" description="Disordered" evidence="2">
    <location>
        <begin position="145"/>
        <end position="235"/>
    </location>
</feature>
<feature type="compositionally biased region" description="Polar residues" evidence="2">
    <location>
        <begin position="145"/>
        <end position="167"/>
    </location>
</feature>
<feature type="compositionally biased region" description="Low complexity" evidence="2">
    <location>
        <begin position="168"/>
        <end position="207"/>
    </location>
</feature>
<feature type="compositionally biased region" description="Polar residues" evidence="2">
    <location>
        <begin position="208"/>
        <end position="218"/>
    </location>
</feature>
<feature type="compositionally biased region" description="Low complexity" evidence="2">
    <location>
        <begin position="219"/>
        <end position="235"/>
    </location>
</feature>
<name>RODZ_SHIBS</name>
<comment type="function">
    <text evidence="1">Cytoskeletal protein that is involved in cell-shape control through regulation of the length of the long axis.</text>
</comment>
<comment type="subcellular location">
    <subcellularLocation>
        <location evidence="1">Cell inner membrane</location>
        <topology evidence="1">Single-pass type II membrane protein</topology>
    </subcellularLocation>
    <text evidence="1">Forms helical filaments along the long axis of the cell.</text>
</comment>
<comment type="domain">
    <text evidence="1">The helix-turn-helix (HTH) motif in the cytoplasmic domain of the N-terminus is involved in the formation of spirals to maintain the rigid rod shape. As this protein is anchored in the cytoplasmic membrane, the HTH motif may contribute to protein-protein interactions to form the RodZ helix, which is localized beneath the cytoplasmic membrane. The C-terminal domain may be critical for determination of the rod shape by probably interacting with enzymes required for synthesis of the peptidoglycan layer, including PBPs in the periplasm.</text>
</comment>
<comment type="similarity">
    <text evidence="1">Belongs to the RodZ family.</text>
</comment>
<proteinExistence type="inferred from homology"/>
<gene>
    <name evidence="1" type="primary">rodZ</name>
    <name type="ordered locus">SBO_2540</name>
</gene>
<accession>Q31XX4</accession>